<sequence>MALRLQMLGTGGAFAKKYFNNNALLYAGDFTLLIDCGITAPLALHTIGKSVEEIDAVLITHIHGDHVGGLEELAFRRKFGSGRKPILYIAENLVEPLWENTLKGGLSQDGVIHSLNDVFDVRLLKESEPAQLAPELKVELIRTPHIPGKPSYSLYINDEIFYSADMTFEPELLMRLVRERGCRRIFHEVQLTGKGEVHTTLQELLSLPTEIQSQILLKHYSDDMESFRGATGNMDFLRQHEVYTL</sequence>
<protein>
    <recommendedName>
        <fullName evidence="4">Anti-Pycsar protein Apyc1</fullName>
        <shortName evidence="4">Apyc1</shortName>
    </recommendedName>
</protein>
<feature type="chain" id="PRO_0000456671" description="Anti-Pycsar protein Apyc1">
    <location>
        <begin position="1"/>
        <end position="245"/>
    </location>
</feature>
<feature type="region of interest" description="Beta-lactamase-like" evidence="2">
    <location>
        <begin position="19"/>
        <end position="219"/>
    </location>
</feature>
<feature type="binding site" evidence="2">
    <location>
        <position position="61"/>
    </location>
    <ligand>
        <name>Zn(2+)</name>
        <dbReference type="ChEBI" id="CHEBI:29105"/>
        <label>2</label>
    </ligand>
</feature>
<feature type="binding site" evidence="1">
    <location>
        <position position="63"/>
    </location>
    <ligand>
        <name>Zn(2+)</name>
        <dbReference type="ChEBI" id="CHEBI:29105"/>
        <label>2</label>
    </ligand>
</feature>
<feature type="binding site" evidence="3">
    <location>
        <position position="65"/>
    </location>
    <ligand>
        <name>Zn(2+)</name>
        <dbReference type="ChEBI" id="CHEBI:29105"/>
        <label>1</label>
    </ligand>
</feature>
<feature type="binding site" evidence="3">
    <location>
        <position position="66"/>
    </location>
    <ligand>
        <name>Zn(2+)</name>
        <dbReference type="ChEBI" id="CHEBI:29105"/>
        <label>1</label>
    </ligand>
</feature>
<feature type="binding site" evidence="2">
    <location>
        <position position="145"/>
    </location>
    <ligand>
        <name>Zn(2+)</name>
        <dbReference type="ChEBI" id="CHEBI:29105"/>
        <label>2</label>
    </ligand>
</feature>
<feature type="binding site" evidence="3">
    <location>
        <position position="165"/>
    </location>
    <ligand>
        <name>Zn(2+)</name>
        <dbReference type="ChEBI" id="CHEBI:29105"/>
        <label>1</label>
    </ligand>
</feature>
<feature type="binding site" evidence="3">
    <location>
        <position position="219"/>
    </location>
    <ligand>
        <name>Zn(2+)</name>
        <dbReference type="ChEBI" id="CHEBI:29105"/>
        <label>1</label>
    </ligand>
</feature>
<accession>P0DTL1</accession>
<dbReference type="RefSeq" id="WP_028539944.1">
    <property type="nucleotide sequence ID" value="NZ_JADQ01000063.1"/>
</dbReference>
<dbReference type="PDB" id="7U2R">
    <property type="method" value="X-ray"/>
    <property type="resolution" value="1.85 A"/>
    <property type="chains" value="A=1-245"/>
</dbReference>
<dbReference type="PDBsum" id="7U2R"/>
<dbReference type="SMR" id="P0DTL1"/>
<dbReference type="GO" id="GO:0016787">
    <property type="term" value="F:hydrolase activity"/>
    <property type="evidence" value="ECO:0007669"/>
    <property type="project" value="UniProtKB-KW"/>
</dbReference>
<dbReference type="GO" id="GO:0046872">
    <property type="term" value="F:metal ion binding"/>
    <property type="evidence" value="ECO:0007669"/>
    <property type="project" value="UniProtKB-KW"/>
</dbReference>
<dbReference type="Gene3D" id="3.60.15.10">
    <property type="entry name" value="Ribonuclease Z/Hydroxyacylglutathione hydrolase-like"/>
    <property type="match status" value="1"/>
</dbReference>
<dbReference type="InterPro" id="IPR056308">
    <property type="entry name" value="Anti-Pycsar_Apyc1"/>
</dbReference>
<dbReference type="InterPro" id="IPR001279">
    <property type="entry name" value="Metallo-B-lactamas"/>
</dbReference>
<dbReference type="InterPro" id="IPR036866">
    <property type="entry name" value="RibonucZ/Hydroxyglut_hydro"/>
</dbReference>
<dbReference type="PANTHER" id="PTHR42663:SF6">
    <property type="entry name" value="HYDROLASE C777.06C-RELATED"/>
    <property type="match status" value="1"/>
</dbReference>
<dbReference type="PANTHER" id="PTHR42663">
    <property type="entry name" value="HYDROLASE C777.06C-RELATED-RELATED"/>
    <property type="match status" value="1"/>
</dbReference>
<dbReference type="Pfam" id="PF23023">
    <property type="entry name" value="Anti-Pycsar_Apyc1"/>
    <property type="match status" value="1"/>
</dbReference>
<dbReference type="SMART" id="SM00849">
    <property type="entry name" value="Lactamase_B"/>
    <property type="match status" value="1"/>
</dbReference>
<dbReference type="SUPFAM" id="SSF56281">
    <property type="entry name" value="Metallo-hydrolase/oxidoreductase"/>
    <property type="match status" value="1"/>
</dbReference>
<keyword id="KW-0002">3D-structure</keyword>
<keyword id="KW-0378">Hydrolase</keyword>
<keyword id="KW-0479">Metal-binding</keyword>
<keyword id="KW-0862">Zinc</keyword>
<organism>
    <name type="scientific">Paenibacillus sp. (strain J14)</name>
    <dbReference type="NCBI Taxonomy" id="935845"/>
    <lineage>
        <taxon>Bacteria</taxon>
        <taxon>Bacillati</taxon>
        <taxon>Bacillota</taxon>
        <taxon>Bacilli</taxon>
        <taxon>Bacillales</taxon>
        <taxon>Paenibacillaceae</taxon>
        <taxon>Paenibacillus</taxon>
    </lineage>
</organism>
<comment type="function">
    <text evidence="3">Counteracts the endogenous Pycsar antiviral defense system. Phosphodiesterase that enables metal-dependent hydrolysis of host cyclic nucleotide Pycsar defense signals such as cCMP and cUMP.</text>
</comment>
<comment type="catalytic activity">
    <reaction evidence="3">
        <text>3',5'-cyclic CMP + H2O = CMP + H(+)</text>
        <dbReference type="Rhea" id="RHEA:72675"/>
        <dbReference type="ChEBI" id="CHEBI:15377"/>
        <dbReference type="ChEBI" id="CHEBI:15378"/>
        <dbReference type="ChEBI" id="CHEBI:58003"/>
        <dbReference type="ChEBI" id="CHEBI:60377"/>
    </reaction>
    <physiologicalReaction direction="left-to-right" evidence="3">
        <dbReference type="Rhea" id="RHEA:72676"/>
    </physiologicalReaction>
</comment>
<comment type="catalytic activity">
    <reaction evidence="3">
        <text>3',5'-cyclic UMP + H2O = UMP + H(+)</text>
        <dbReference type="Rhea" id="RHEA:70575"/>
        <dbReference type="ChEBI" id="CHEBI:15377"/>
        <dbReference type="ChEBI" id="CHEBI:15378"/>
        <dbReference type="ChEBI" id="CHEBI:57865"/>
        <dbReference type="ChEBI" id="CHEBI:184387"/>
    </reaction>
    <physiologicalReaction direction="left-to-right" evidence="3">
        <dbReference type="Rhea" id="RHEA:70576"/>
    </physiologicalReaction>
</comment>
<comment type="cofactor">
    <cofactor evidence="2">
        <name>Zn(2+)</name>
        <dbReference type="ChEBI" id="CHEBI:29105"/>
    </cofactor>
    <text evidence="2">Coordinates 2 Zn(2+) ions. One protomer coordinates the metal ions and the opposing protomer provides the catalytic residues required for cCMP hydrolysis.</text>
</comment>
<comment type="subunit">
    <text evidence="3">Homodimer.</text>
</comment>
<comment type="miscellaneous">
    <text evidence="3">This homolog of an antiviral immune evasion nuclease may be due to cryptic prophages, or it may play a role in regulating the endogenous antiviral defense system based on cyclic nucleotides.</text>
</comment>
<comment type="similarity">
    <text evidence="5">Belongs to the anti-Pycsar protein Apyc1 family.</text>
</comment>
<reference evidence="6" key="1">
    <citation type="journal article" date="2022" name="Nature">
        <title>Phage anti-CBASS and anti-Pycsar nucleases subvert bacterial immunity.</title>
        <authorList>
            <person name="Hobbs S.J."/>
            <person name="Wein T."/>
            <person name="Lu A."/>
            <person name="Morehouse B.R."/>
            <person name="Schnabel J."/>
            <person name="Leavitt A."/>
            <person name="Yirmiya E."/>
            <person name="Sorek R."/>
            <person name="Kranzusch P.J."/>
        </authorList>
    </citation>
    <scope>X-RAY CRYSTALLOGRAPHY (1.85 ANGSTROMS) OF 2-245 IN COMPLEX WITH ZINC</scope>
    <scope>FUNCTION</scope>
    <scope>SUBUNIT</scope>
    <scope>CATALYTIC ACTIVITY</scope>
    <source>
        <strain>J14</strain>
    </source>
</reference>
<proteinExistence type="evidence at protein level"/>
<name>APYC1_PAES1</name>
<evidence type="ECO:0000250" key="1">
    <source>
        <dbReference type="UniProtKB" id="A0A2W1NDJ7"/>
    </source>
</evidence>
<evidence type="ECO:0000250" key="2">
    <source>
        <dbReference type="UniProtKB" id="A0A345MJY6"/>
    </source>
</evidence>
<evidence type="ECO:0000269" key="3">
    <source>
    </source>
</evidence>
<evidence type="ECO:0000303" key="4">
    <source>
    </source>
</evidence>
<evidence type="ECO:0000305" key="5"/>
<evidence type="ECO:0007744" key="6">
    <source>
        <dbReference type="PDB" id="7U2R"/>
    </source>
</evidence>